<protein>
    <recommendedName>
        <fullName evidence="1">Small ribosomal subunit protein bS16c</fullName>
    </recommendedName>
    <alternativeName>
        <fullName evidence="3">30S ribosomal protein S16, chloroplastic</fullName>
    </alternativeName>
</protein>
<sequence>MVKLRLKRCGRKQRAVYRIVAIDVRSRREGKDLQKVGFYDPIKNQTYLNVPAILYFLEKGAQPTETVQDILKKAEVFKELRLNQPKFN</sequence>
<proteinExistence type="evidence at transcript level"/>
<organism>
    <name type="scientific">Solanum lycopersicum</name>
    <name type="common">Tomato</name>
    <name type="synonym">Lycopersicon esculentum</name>
    <dbReference type="NCBI Taxonomy" id="4081"/>
    <lineage>
        <taxon>Eukaryota</taxon>
        <taxon>Viridiplantae</taxon>
        <taxon>Streptophyta</taxon>
        <taxon>Embryophyta</taxon>
        <taxon>Tracheophyta</taxon>
        <taxon>Spermatophyta</taxon>
        <taxon>Magnoliopsida</taxon>
        <taxon>eudicotyledons</taxon>
        <taxon>Gunneridae</taxon>
        <taxon>Pentapetalae</taxon>
        <taxon>asterids</taxon>
        <taxon>lamiids</taxon>
        <taxon>Solanales</taxon>
        <taxon>Solanaceae</taxon>
        <taxon>Solanoideae</taxon>
        <taxon>Solaneae</taxon>
        <taxon>Solanum</taxon>
        <taxon>Solanum subgen. Lycopersicon</taxon>
    </lineage>
</organism>
<accession>Q2MIB8</accession>
<evidence type="ECO:0000255" key="1">
    <source>
        <dbReference type="HAMAP-Rule" id="MF_00385"/>
    </source>
</evidence>
<evidence type="ECO:0000269" key="2">
    <source>
    </source>
</evidence>
<evidence type="ECO:0000305" key="3"/>
<reference key="1">
    <citation type="journal article" date="2006" name="Theor. Appl. Genet.">
        <title>Complete chloroplast genome sequences of Solanum bulbocastanum, Solanum lycopersicum and comparative analyses with other Solanaceae genomes.</title>
        <authorList>
            <person name="Daniell H."/>
            <person name="Lee S.-B."/>
            <person name="Grevich J."/>
            <person name="Saski C."/>
            <person name="Quesada-Vargas T."/>
            <person name="Guda C."/>
            <person name="Tomkins J."/>
            <person name="Jansen R.K."/>
        </authorList>
    </citation>
    <scope>NUCLEOTIDE SEQUENCE [LARGE SCALE GENOMIC DNA]</scope>
    <source>
        <strain>cv. LA3023</strain>
    </source>
</reference>
<reference key="2">
    <citation type="journal article" date="2006" name="J. Mol. Evol.">
        <title>Sequence of the tomato chloroplast DNA and evolutionary comparison of solanaceous plastid genomes.</title>
        <authorList>
            <person name="Kahlau S."/>
            <person name="Aspinall S."/>
            <person name="Gray J.C."/>
            <person name="Bock R."/>
        </authorList>
    </citation>
    <scope>NUCLEOTIDE SEQUENCE [LARGE SCALE GENOMIC DNA]</scope>
    <source>
        <strain>cv. IPA-6</strain>
    </source>
</reference>
<reference key="3">
    <citation type="journal article" date="2008" name="Mol. Biol. Evol.">
        <title>Substitution of the gene for chloroplast RPS16 was assisted by generation of a dual targeting signal.</title>
        <authorList>
            <person name="Ueda M."/>
            <person name="Nishikawa T."/>
            <person name="Fujimoto M."/>
            <person name="Takanashi H."/>
            <person name="Arimura S."/>
            <person name="Tsutsumi N."/>
            <person name="Kadowaki K."/>
        </authorList>
    </citation>
    <scope>INDUCTION</scope>
    <source>
        <strain>cv. MicroTom</strain>
        <tissue>Leaf</tissue>
    </source>
</reference>
<geneLocation type="chloroplast"/>
<feature type="chain" id="PRO_0000276960" description="Small ribosomal subunit protein bS16c">
    <location>
        <begin position="1"/>
        <end position="88"/>
    </location>
</feature>
<comment type="subcellular location">
    <subcellularLocation>
        <location>Plastid</location>
        <location>Chloroplast</location>
    </subcellularLocation>
</comment>
<comment type="induction">
    <text evidence="2">Transcribed and spliced in green leaves.</text>
</comment>
<comment type="similarity">
    <text evidence="1">Belongs to the bacterial ribosomal protein bS16 family.</text>
</comment>
<keyword id="KW-0150">Chloroplast</keyword>
<keyword id="KW-0934">Plastid</keyword>
<keyword id="KW-1185">Reference proteome</keyword>
<keyword id="KW-0687">Ribonucleoprotein</keyword>
<keyword id="KW-0689">Ribosomal protein</keyword>
<name>RR16_SOLLC</name>
<dbReference type="EMBL" id="DQ347959">
    <property type="protein sequence ID" value="ABC56282.1"/>
    <property type="molecule type" value="Genomic_DNA"/>
</dbReference>
<dbReference type="EMBL" id="AM087200">
    <property type="protein sequence ID" value="CAJ32375.1"/>
    <property type="molecule type" value="Genomic_DNA"/>
</dbReference>
<dbReference type="RefSeq" id="AP_004910.1">
    <property type="nucleotide sequence ID" value="AC_000188.1"/>
</dbReference>
<dbReference type="RefSeq" id="YP_008563070.1">
    <property type="nucleotide sequence ID" value="NC_007898.3"/>
</dbReference>
<dbReference type="SMR" id="Q2MIB8"/>
<dbReference type="FunCoup" id="Q2MIB8">
    <property type="interactions" value="9"/>
</dbReference>
<dbReference type="STRING" id="4081.Q2MIB8"/>
<dbReference type="GeneID" id="3950458"/>
<dbReference type="KEGG" id="sly:3950458"/>
<dbReference type="InParanoid" id="Q2MIB8"/>
<dbReference type="OrthoDB" id="407221at2759"/>
<dbReference type="Proteomes" id="UP000004994">
    <property type="component" value="Chloroplast"/>
</dbReference>
<dbReference type="GO" id="GO:0009507">
    <property type="term" value="C:chloroplast"/>
    <property type="evidence" value="ECO:0007669"/>
    <property type="project" value="UniProtKB-SubCell"/>
</dbReference>
<dbReference type="GO" id="GO:0015935">
    <property type="term" value="C:small ribosomal subunit"/>
    <property type="evidence" value="ECO:0000318"/>
    <property type="project" value="GO_Central"/>
</dbReference>
<dbReference type="GO" id="GO:0003735">
    <property type="term" value="F:structural constituent of ribosome"/>
    <property type="evidence" value="ECO:0000318"/>
    <property type="project" value="GO_Central"/>
</dbReference>
<dbReference type="GO" id="GO:0006412">
    <property type="term" value="P:translation"/>
    <property type="evidence" value="ECO:0007669"/>
    <property type="project" value="UniProtKB-UniRule"/>
</dbReference>
<dbReference type="FunFam" id="3.30.1320.10:FF:000003">
    <property type="entry name" value="30S ribosomal protein S16, chloroplastic"/>
    <property type="match status" value="1"/>
</dbReference>
<dbReference type="Gene3D" id="3.30.1320.10">
    <property type="match status" value="1"/>
</dbReference>
<dbReference type="HAMAP" id="MF_00385">
    <property type="entry name" value="Ribosomal_bS16"/>
    <property type="match status" value="1"/>
</dbReference>
<dbReference type="InterPro" id="IPR000307">
    <property type="entry name" value="Ribosomal_bS16"/>
</dbReference>
<dbReference type="InterPro" id="IPR020592">
    <property type="entry name" value="Ribosomal_bS16_CS"/>
</dbReference>
<dbReference type="InterPro" id="IPR023803">
    <property type="entry name" value="Ribosomal_bS16_dom_sf"/>
</dbReference>
<dbReference type="NCBIfam" id="TIGR00002">
    <property type="entry name" value="S16"/>
    <property type="match status" value="1"/>
</dbReference>
<dbReference type="PANTHER" id="PTHR12919">
    <property type="entry name" value="30S RIBOSOMAL PROTEIN S16"/>
    <property type="match status" value="1"/>
</dbReference>
<dbReference type="PANTHER" id="PTHR12919:SF20">
    <property type="entry name" value="SMALL RIBOSOMAL SUBUNIT PROTEIN BS16M"/>
    <property type="match status" value="1"/>
</dbReference>
<dbReference type="Pfam" id="PF00886">
    <property type="entry name" value="Ribosomal_S16"/>
    <property type="match status" value="1"/>
</dbReference>
<dbReference type="SUPFAM" id="SSF54565">
    <property type="entry name" value="Ribosomal protein S16"/>
    <property type="match status" value="1"/>
</dbReference>
<dbReference type="PROSITE" id="PS00732">
    <property type="entry name" value="RIBOSOMAL_S16"/>
    <property type="match status" value="1"/>
</dbReference>
<gene>
    <name evidence="1" type="primary">rps16</name>
</gene>